<proteinExistence type="evidence at protein level"/>
<organism>
    <name type="scientific">Sus scrofa</name>
    <name type="common">Pig</name>
    <dbReference type="NCBI Taxonomy" id="9823"/>
    <lineage>
        <taxon>Eukaryota</taxon>
        <taxon>Metazoa</taxon>
        <taxon>Chordata</taxon>
        <taxon>Craniata</taxon>
        <taxon>Vertebrata</taxon>
        <taxon>Euteleostomi</taxon>
        <taxon>Mammalia</taxon>
        <taxon>Eutheria</taxon>
        <taxon>Laurasiatheria</taxon>
        <taxon>Artiodactyla</taxon>
        <taxon>Suina</taxon>
        <taxon>Suidae</taxon>
        <taxon>Sus</taxon>
    </lineage>
</organism>
<accession>P37111</accession>
<feature type="initiator methionine" description="Removed" evidence="4">
    <location>
        <position position="1"/>
    </location>
</feature>
<feature type="chain" id="PRO_0000185237" description="Aminoacylase-1">
    <location>
        <begin position="2"/>
        <end position="407"/>
    </location>
</feature>
<feature type="active site" evidence="1">
    <location>
        <position position="82"/>
    </location>
</feature>
<feature type="active site" description="Proton acceptor" evidence="1">
    <location>
        <position position="147"/>
    </location>
</feature>
<feature type="binding site" evidence="2">
    <location>
        <position position="80"/>
    </location>
    <ligand>
        <name>Zn(2+)</name>
        <dbReference type="ChEBI" id="CHEBI:29105"/>
        <label>1</label>
    </ligand>
</feature>
<feature type="binding site" evidence="2">
    <location>
        <position position="113"/>
    </location>
    <ligand>
        <name>Zn(2+)</name>
        <dbReference type="ChEBI" id="CHEBI:29105"/>
        <label>1</label>
    </ligand>
</feature>
<feature type="binding site" evidence="2">
    <location>
        <position position="113"/>
    </location>
    <ligand>
        <name>Zn(2+)</name>
        <dbReference type="ChEBI" id="CHEBI:29105"/>
        <label>2</label>
    </ligand>
</feature>
<feature type="binding site" evidence="2">
    <location>
        <position position="148"/>
    </location>
    <ligand>
        <name>Zn(2+)</name>
        <dbReference type="ChEBI" id="CHEBI:29105"/>
        <label>2</label>
    </ligand>
</feature>
<feature type="binding site" evidence="2">
    <location>
        <position position="175"/>
    </location>
    <ligand>
        <name>Zn(2+)</name>
        <dbReference type="ChEBI" id="CHEBI:29105"/>
        <label>1</label>
    </ligand>
</feature>
<feature type="binding site" evidence="2">
    <location>
        <position position="372"/>
    </location>
    <ligand>
        <name>Zn(2+)</name>
        <dbReference type="ChEBI" id="CHEBI:29105"/>
        <label>2</label>
    </ligand>
</feature>
<feature type="modified residue" description="N-acetylalanine" evidence="4">
    <location>
        <position position="2"/>
    </location>
</feature>
<feature type="sequence conflict" description="In Ref. 2; CAA48565." evidence="5" ref="2">
    <location>
        <position position="395"/>
    </location>
</feature>
<feature type="sequence conflict" description="In Ref. 2; CAA48565." evidence="5" ref="2">
    <original>A</original>
    <variation>T</variation>
    <location>
        <position position="398"/>
    </location>
</feature>
<keyword id="KW-0007">Acetylation</keyword>
<keyword id="KW-0963">Cytoplasm</keyword>
<keyword id="KW-0903">Direct protein sequencing</keyword>
<keyword id="KW-0378">Hydrolase</keyword>
<keyword id="KW-0479">Metal-binding</keyword>
<keyword id="KW-1185">Reference proteome</keyword>
<keyword id="KW-0862">Zinc</keyword>
<dbReference type="EC" id="3.5.1.14" evidence="3"/>
<dbReference type="EMBL" id="D13514">
    <property type="protein sequence ID" value="BAA02731.1"/>
    <property type="molecule type" value="mRNA"/>
</dbReference>
<dbReference type="EMBL" id="X68564">
    <property type="protein sequence ID" value="CAA48565.1"/>
    <property type="molecule type" value="mRNA"/>
</dbReference>
<dbReference type="EMBL" id="AB017196">
    <property type="protein sequence ID" value="BAA76403.1"/>
    <property type="molecule type" value="Genomic_DNA"/>
</dbReference>
<dbReference type="PIR" id="JN0584">
    <property type="entry name" value="JN0584"/>
</dbReference>
<dbReference type="RefSeq" id="NP_999061.1">
    <property type="nucleotide sequence ID" value="NM_213896.1"/>
</dbReference>
<dbReference type="SMR" id="P37111"/>
<dbReference type="FunCoup" id="P37111">
    <property type="interactions" value="140"/>
</dbReference>
<dbReference type="STRING" id="9823.ENSSSCP00000074309"/>
<dbReference type="MEROPS" id="M20.973"/>
<dbReference type="iPTMnet" id="P37111"/>
<dbReference type="PaxDb" id="9823-ENSSSCP00000025679"/>
<dbReference type="PeptideAtlas" id="P37111"/>
<dbReference type="Ensembl" id="ENSSSCT00000088369.2">
    <property type="protein sequence ID" value="ENSSSCP00000074309.2"/>
    <property type="gene ID" value="ENSSSCG00000023325.4"/>
</dbReference>
<dbReference type="Ensembl" id="ENSSSCT00015087499.1">
    <property type="protein sequence ID" value="ENSSSCP00015035649.1"/>
    <property type="gene ID" value="ENSSSCG00015064834.1"/>
</dbReference>
<dbReference type="Ensembl" id="ENSSSCT00015087631.1">
    <property type="protein sequence ID" value="ENSSSCP00015035709.1"/>
    <property type="gene ID" value="ENSSSCG00015064834.1"/>
</dbReference>
<dbReference type="Ensembl" id="ENSSSCT00015088517.1">
    <property type="protein sequence ID" value="ENSSSCP00015036094.1"/>
    <property type="gene ID" value="ENSSSCG00015064834.1"/>
</dbReference>
<dbReference type="Ensembl" id="ENSSSCT00015088643.1">
    <property type="protein sequence ID" value="ENSSSCP00015036143.1"/>
    <property type="gene ID" value="ENSSSCG00015064834.1"/>
</dbReference>
<dbReference type="Ensembl" id="ENSSSCT00015089017.1">
    <property type="protein sequence ID" value="ENSSSCP00015036313.1"/>
    <property type="gene ID" value="ENSSSCG00015064834.1"/>
</dbReference>
<dbReference type="Ensembl" id="ENSSSCT00015089254.1">
    <property type="protein sequence ID" value="ENSSSCP00015036402.1"/>
    <property type="gene ID" value="ENSSSCG00015064834.1"/>
</dbReference>
<dbReference type="Ensembl" id="ENSSSCT00040043190.1">
    <property type="protein sequence ID" value="ENSSSCP00040018123.1"/>
    <property type="gene ID" value="ENSSSCG00040032105.1"/>
</dbReference>
<dbReference type="Ensembl" id="ENSSSCT00040043263.1">
    <property type="protein sequence ID" value="ENSSSCP00040018158.1"/>
    <property type="gene ID" value="ENSSSCG00040032105.1"/>
</dbReference>
<dbReference type="Ensembl" id="ENSSSCT00040043452.1">
    <property type="protein sequence ID" value="ENSSSCP00040018234.1"/>
    <property type="gene ID" value="ENSSSCG00040032105.1"/>
</dbReference>
<dbReference type="Ensembl" id="ENSSSCT00040043801.1">
    <property type="protein sequence ID" value="ENSSSCP00040018385.1"/>
    <property type="gene ID" value="ENSSSCG00040032105.1"/>
</dbReference>
<dbReference type="Ensembl" id="ENSSSCT00040043896.1">
    <property type="protein sequence ID" value="ENSSSCP00040018429.1"/>
    <property type="gene ID" value="ENSSSCG00040032105.1"/>
</dbReference>
<dbReference type="Ensembl" id="ENSSSCT00065033227.1">
    <property type="protein sequence ID" value="ENSSSCP00065013723.1"/>
    <property type="gene ID" value="ENSSSCG00065024868.1"/>
</dbReference>
<dbReference type="Ensembl" id="ENSSSCT00065033231.1">
    <property type="protein sequence ID" value="ENSSSCP00065013727.1"/>
    <property type="gene ID" value="ENSSSCG00065024868.1"/>
</dbReference>
<dbReference type="Ensembl" id="ENSSSCT00065033263.1">
    <property type="protein sequence ID" value="ENSSSCP00065013741.1"/>
    <property type="gene ID" value="ENSSSCG00065024868.1"/>
</dbReference>
<dbReference type="Ensembl" id="ENSSSCT00065033274.1">
    <property type="protein sequence ID" value="ENSSSCP00065013749.1"/>
    <property type="gene ID" value="ENSSSCG00065024868.1"/>
</dbReference>
<dbReference type="Ensembl" id="ENSSSCT00065033301.1">
    <property type="protein sequence ID" value="ENSSSCP00065013760.1"/>
    <property type="gene ID" value="ENSSSCG00065024868.1"/>
</dbReference>
<dbReference type="Ensembl" id="ENSSSCT00065033313.1">
    <property type="protein sequence ID" value="ENSSSCP00065013766.1"/>
    <property type="gene ID" value="ENSSSCG00065024868.1"/>
</dbReference>
<dbReference type="Ensembl" id="ENSSSCT00090058227">
    <property type="protein sequence ID" value="ENSSSCP00090036256"/>
    <property type="gene ID" value="ENSSSCG00090032893"/>
</dbReference>
<dbReference type="Ensembl" id="ENSSSCT00110048665">
    <property type="protein sequence ID" value="ENSSSCP00110034266"/>
    <property type="gene ID" value="ENSSSCG00110025058"/>
</dbReference>
<dbReference type="GeneID" id="396930"/>
<dbReference type="KEGG" id="ssc:396930"/>
<dbReference type="CTD" id="95"/>
<dbReference type="eggNOG" id="KOG2275">
    <property type="taxonomic scope" value="Eukaryota"/>
</dbReference>
<dbReference type="GeneTree" id="ENSGT00940000155631"/>
<dbReference type="HOGENOM" id="CLU_021802_5_0_1"/>
<dbReference type="InParanoid" id="P37111"/>
<dbReference type="OMA" id="GTDAKQF"/>
<dbReference type="OrthoDB" id="3064516at2759"/>
<dbReference type="TreeFam" id="TF313693"/>
<dbReference type="BRENDA" id="3.5.1.14">
    <property type="organism ID" value="6170"/>
</dbReference>
<dbReference type="Reactome" id="R-SSC-5423646">
    <property type="pathway name" value="Aflatoxin activation and detoxification"/>
</dbReference>
<dbReference type="Reactome" id="R-SSC-9753281">
    <property type="pathway name" value="Paracetamol ADME"/>
</dbReference>
<dbReference type="SABIO-RK" id="P37111"/>
<dbReference type="Proteomes" id="UP000008227">
    <property type="component" value="Chromosome 13"/>
</dbReference>
<dbReference type="Proteomes" id="UP000314985">
    <property type="component" value="Unplaced"/>
</dbReference>
<dbReference type="Proteomes" id="UP000694570">
    <property type="component" value="Unplaced"/>
</dbReference>
<dbReference type="Proteomes" id="UP000694571">
    <property type="component" value="Unplaced"/>
</dbReference>
<dbReference type="Proteomes" id="UP000694720">
    <property type="component" value="Unplaced"/>
</dbReference>
<dbReference type="Proteomes" id="UP000694722">
    <property type="component" value="Unplaced"/>
</dbReference>
<dbReference type="Proteomes" id="UP000694723">
    <property type="component" value="Unplaced"/>
</dbReference>
<dbReference type="Proteomes" id="UP000694724">
    <property type="component" value="Unplaced"/>
</dbReference>
<dbReference type="Proteomes" id="UP000694725">
    <property type="component" value="Unplaced"/>
</dbReference>
<dbReference type="Proteomes" id="UP000694726">
    <property type="component" value="Unplaced"/>
</dbReference>
<dbReference type="Proteomes" id="UP000694727">
    <property type="component" value="Unplaced"/>
</dbReference>
<dbReference type="Proteomes" id="UP000694728">
    <property type="component" value="Unplaced"/>
</dbReference>
<dbReference type="GO" id="GO:0005737">
    <property type="term" value="C:cytoplasm"/>
    <property type="evidence" value="ECO:0007669"/>
    <property type="project" value="UniProtKB-SubCell"/>
</dbReference>
<dbReference type="GO" id="GO:0070062">
    <property type="term" value="C:extracellular exosome"/>
    <property type="evidence" value="ECO:0007669"/>
    <property type="project" value="Ensembl"/>
</dbReference>
<dbReference type="GO" id="GO:0004046">
    <property type="term" value="F:aminoacylase activity"/>
    <property type="evidence" value="ECO:0007669"/>
    <property type="project" value="UniProtKB-EC"/>
</dbReference>
<dbReference type="GO" id="GO:0042802">
    <property type="term" value="F:identical protein binding"/>
    <property type="evidence" value="ECO:0007669"/>
    <property type="project" value="Ensembl"/>
</dbReference>
<dbReference type="GO" id="GO:0046872">
    <property type="term" value="F:metal ion binding"/>
    <property type="evidence" value="ECO:0007669"/>
    <property type="project" value="UniProtKB-KW"/>
</dbReference>
<dbReference type="GO" id="GO:0006520">
    <property type="term" value="P:amino acid metabolic process"/>
    <property type="evidence" value="ECO:0007669"/>
    <property type="project" value="InterPro"/>
</dbReference>
<dbReference type="CDD" id="cd05646">
    <property type="entry name" value="M20_AcylaseI_like"/>
    <property type="match status" value="1"/>
</dbReference>
<dbReference type="FunFam" id="3.40.630.10:FF:000019">
    <property type="entry name" value="Aminoacylase 1"/>
    <property type="match status" value="1"/>
</dbReference>
<dbReference type="FunFam" id="1.10.150.900:FF:000001">
    <property type="entry name" value="Aminoacylase-1, putative"/>
    <property type="match status" value="1"/>
</dbReference>
<dbReference type="FunFam" id="3.30.70.360:FF:000005">
    <property type="entry name" value="Putative Aminoacylase-1"/>
    <property type="match status" value="1"/>
</dbReference>
<dbReference type="Gene3D" id="1.10.150.900">
    <property type="match status" value="1"/>
</dbReference>
<dbReference type="Gene3D" id="3.30.70.360">
    <property type="match status" value="1"/>
</dbReference>
<dbReference type="Gene3D" id="3.40.630.10">
    <property type="entry name" value="Zn peptidases"/>
    <property type="match status" value="1"/>
</dbReference>
<dbReference type="InterPro" id="IPR052083">
    <property type="entry name" value="Aminoacylase-1_M20A"/>
</dbReference>
<dbReference type="InterPro" id="IPR001261">
    <property type="entry name" value="ArgE/DapE_CS"/>
</dbReference>
<dbReference type="InterPro" id="IPR036264">
    <property type="entry name" value="Bact_exopeptidase_dim_dom"/>
</dbReference>
<dbReference type="InterPro" id="IPR010159">
    <property type="entry name" value="N-acyl_aa_amidohydrolase"/>
</dbReference>
<dbReference type="InterPro" id="IPR002933">
    <property type="entry name" value="Peptidase_M20"/>
</dbReference>
<dbReference type="InterPro" id="IPR011650">
    <property type="entry name" value="Peptidase_M20_dimer"/>
</dbReference>
<dbReference type="NCBIfam" id="TIGR01880">
    <property type="entry name" value="Ac-peptdase-euk"/>
    <property type="match status" value="1"/>
</dbReference>
<dbReference type="PANTHER" id="PTHR45892">
    <property type="entry name" value="AMINOACYLASE-1"/>
    <property type="match status" value="1"/>
</dbReference>
<dbReference type="PANTHER" id="PTHR45892:SF1">
    <property type="entry name" value="AMINOACYLASE-1"/>
    <property type="match status" value="1"/>
</dbReference>
<dbReference type="Pfam" id="PF07687">
    <property type="entry name" value="M20_dimer"/>
    <property type="match status" value="1"/>
</dbReference>
<dbReference type="Pfam" id="PF01546">
    <property type="entry name" value="Peptidase_M20"/>
    <property type="match status" value="1"/>
</dbReference>
<dbReference type="PIRSF" id="PIRSF036696">
    <property type="entry name" value="ACY-1"/>
    <property type="match status" value="1"/>
</dbReference>
<dbReference type="SUPFAM" id="SSF55031">
    <property type="entry name" value="Bacterial exopeptidase dimerisation domain"/>
    <property type="match status" value="1"/>
</dbReference>
<dbReference type="SUPFAM" id="SSF53187">
    <property type="entry name" value="Zn-dependent exopeptidases"/>
    <property type="match status" value="1"/>
</dbReference>
<dbReference type="PROSITE" id="PS00758">
    <property type="entry name" value="ARGE_DAPE_CPG2_1"/>
    <property type="match status" value="1"/>
</dbReference>
<dbReference type="PROSITE" id="PS00759">
    <property type="entry name" value="ARGE_DAPE_CPG2_2"/>
    <property type="match status" value="1"/>
</dbReference>
<sequence length="407" mass="45347">MASKGREGEHPSVTLFRQYLRIRTVQPEPDYGAAVAFLEERARQLGLGCQKVEVVPGHVVTVLTWPGTNPTLSSILLNSHTDVVPVFKEHWSHDPFEGFKDADGYIYGRGAQDMKCVSIQYLEAVRRLKVEGHHFPRTIHMTFVPDEEVGGHQGMELFVKRPEFQALRAGFALDEGLASPTDAFTVFYSERSPWWLRVTSTGKPGHGSRFIEDTAAEKLHKVINSILAFREKEKQRLQSNQLKPGAVTSVNLTMLEGGVAYNVVPATMSACFDFRVAPDVDLKAFEEQLQSWCQAAGEGVTFEFVQKWMETQVTSTDDSDPWWAAFSGVFKDMKLALELEICPASTDARYIRAAGVPALGFSPMNHTPVLLHDHDERLHEAVFLRGVDIYTQLLSALASVPALPSES</sequence>
<reference key="1">
    <citation type="journal article" date="1992" name="J. Biochem.">
        <title>The primary structure of porcine aminoacylase 1 deduced from cDNA sequence.</title>
        <authorList>
            <person name="Mitta M."/>
            <person name="Ohnogi H."/>
            <person name="Yamamoto A."/>
            <person name="Kato I."/>
            <person name="Sakiyama F."/>
            <person name="Tsunasawa S."/>
        </authorList>
    </citation>
    <scope>NUCLEOTIDE SEQUENCE [MRNA]</scope>
    <scope>PARTIAL PROTEIN SEQUENCE</scope>
    <scope>ACETYLATION AT ALA-2</scope>
    <source>
        <tissue>Kidney</tissue>
    </source>
</reference>
<reference key="2">
    <citation type="journal article" date="1992" name="Biol. Chem. Hoppe-Seyler">
        <title>Cloning and sequence analyses of cDNAs encoding aminoacylase I from porcine kidney.</title>
        <authorList>
            <person name="Jakob M."/>
            <person name="Miller Y.E."/>
            <person name="Roehm K.H."/>
        </authorList>
    </citation>
    <scope>NUCLEOTIDE SEQUENCE [MRNA]</scope>
    <source>
        <tissue>Kidney</tissue>
    </source>
</reference>
<reference key="3">
    <citation type="submission" date="1998-08" db="EMBL/GenBank/DDBJ databases">
        <title>Porcine cosmid clone containing the ACY-1 and rpL29/HIP genes.</title>
        <authorList>
            <person name="Sawazaki T."/>
            <person name="Hamasima N."/>
        </authorList>
    </citation>
    <scope>NUCLEOTIDE SEQUENCE [GENOMIC DNA]</scope>
</reference>
<gene>
    <name type="primary">ACY1</name>
</gene>
<protein>
    <recommendedName>
        <fullName>Aminoacylase-1</fullName>
        <shortName>ACY-1</shortName>
        <ecNumber evidence="3">3.5.1.14</ecNumber>
    </recommendedName>
    <alternativeName>
        <fullName>N-acyl-L-amino-acid amidohydrolase</fullName>
    </alternativeName>
</protein>
<comment type="function">
    <text evidence="3">Catalyzes the hydrolysis of N-acetylated amino acids to acetate and free amino acids.</text>
</comment>
<comment type="catalytic activity">
    <reaction evidence="3">
        <text>an N-acyl-L-amino acid + H2O = an L-alpha-amino acid + a carboxylate</text>
        <dbReference type="Rhea" id="RHEA:15565"/>
        <dbReference type="ChEBI" id="CHEBI:15377"/>
        <dbReference type="ChEBI" id="CHEBI:29067"/>
        <dbReference type="ChEBI" id="CHEBI:59869"/>
        <dbReference type="ChEBI" id="CHEBI:59874"/>
        <dbReference type="EC" id="3.5.1.14"/>
    </reaction>
    <physiologicalReaction direction="left-to-right" evidence="3">
        <dbReference type="Rhea" id="RHEA:15566"/>
    </physiologicalReaction>
</comment>
<comment type="catalytic activity">
    <reaction evidence="2">
        <text>N-acetyl-L-methionine + H2O = L-methionine + acetate</text>
        <dbReference type="Rhea" id="RHEA:67440"/>
        <dbReference type="ChEBI" id="CHEBI:15377"/>
        <dbReference type="ChEBI" id="CHEBI:30089"/>
        <dbReference type="ChEBI" id="CHEBI:57844"/>
        <dbReference type="ChEBI" id="CHEBI:71670"/>
    </reaction>
    <physiologicalReaction direction="left-to-right" evidence="2">
        <dbReference type="Rhea" id="RHEA:67441"/>
    </physiologicalReaction>
</comment>
<comment type="catalytic activity">
    <reaction evidence="3">
        <text>N-acetyl-L-glutamine + H2O = L-glutamine + acetate</text>
        <dbReference type="Rhea" id="RHEA:67368"/>
        <dbReference type="ChEBI" id="CHEBI:15377"/>
        <dbReference type="ChEBI" id="CHEBI:30089"/>
        <dbReference type="ChEBI" id="CHEBI:58359"/>
        <dbReference type="ChEBI" id="CHEBI:143879"/>
    </reaction>
    <physiologicalReaction direction="left-to-right" evidence="3">
        <dbReference type="Rhea" id="RHEA:67369"/>
    </physiologicalReaction>
</comment>
<comment type="cofactor">
    <cofactor evidence="2">
        <name>Zn(2+)</name>
        <dbReference type="ChEBI" id="CHEBI:29105"/>
    </cofactor>
    <text evidence="2">Binds 2 Zn(2+) ions per subunit.</text>
</comment>
<comment type="subunit">
    <text evidence="3">Homodimer (By similarity). Interacts with SPHK1 (By similarity).</text>
</comment>
<comment type="subcellular location">
    <subcellularLocation>
        <location>Cytoplasm</location>
    </subcellularLocation>
</comment>
<comment type="similarity">
    <text evidence="5">Belongs to the peptidase M20A family.</text>
</comment>
<evidence type="ECO:0000250" key="1"/>
<evidence type="ECO:0000250" key="2">
    <source>
        <dbReference type="UniProtKB" id="Q03154"/>
    </source>
</evidence>
<evidence type="ECO:0000250" key="3">
    <source>
        <dbReference type="UniProtKB" id="Q99JW2"/>
    </source>
</evidence>
<evidence type="ECO:0000269" key="4">
    <source>
    </source>
</evidence>
<evidence type="ECO:0000305" key="5"/>
<name>ACY1_PIG</name>